<accession>P44201</accession>
<reference key="1">
    <citation type="journal article" date="1995" name="Science">
        <title>Whole-genome random sequencing and assembly of Haemophilus influenzae Rd.</title>
        <authorList>
            <person name="Fleischmann R.D."/>
            <person name="Adams M.D."/>
            <person name="White O."/>
            <person name="Clayton R.A."/>
            <person name="Kirkness E.F."/>
            <person name="Kerlavage A.R."/>
            <person name="Bult C.J."/>
            <person name="Tomb J.-F."/>
            <person name="Dougherty B.A."/>
            <person name="Merrick J.M."/>
            <person name="McKenney K."/>
            <person name="Sutton G.G."/>
            <person name="FitzHugh W."/>
            <person name="Fields C.A."/>
            <person name="Gocayne J.D."/>
            <person name="Scott J.D."/>
            <person name="Shirley R."/>
            <person name="Liu L.-I."/>
            <person name="Glodek A."/>
            <person name="Kelley J.M."/>
            <person name="Weidman J.F."/>
            <person name="Phillips C.A."/>
            <person name="Spriggs T."/>
            <person name="Hedblom E."/>
            <person name="Cotton M.D."/>
            <person name="Utterback T.R."/>
            <person name="Hanna M.C."/>
            <person name="Nguyen D.T."/>
            <person name="Saudek D.M."/>
            <person name="Brandon R.C."/>
            <person name="Fine L.D."/>
            <person name="Fritchman J.L."/>
            <person name="Fuhrmann J.L."/>
            <person name="Geoghagen N.S.M."/>
            <person name="Gnehm C.L."/>
            <person name="McDonald L.A."/>
            <person name="Small K.V."/>
            <person name="Fraser C.M."/>
            <person name="Smith H.O."/>
            <person name="Venter J.C."/>
        </authorList>
    </citation>
    <scope>NUCLEOTIDE SEQUENCE [LARGE SCALE GENOMIC DNA]</scope>
    <source>
        <strain>ATCC 51907 / DSM 11121 / KW20 / Rd</strain>
    </source>
</reference>
<feature type="chain" id="PRO_0000168738" description="Putative lysine exporter">
    <location>
        <begin position="1"/>
        <end position="195"/>
    </location>
</feature>
<feature type="transmembrane region" description="Helical" evidence="2">
    <location>
        <begin position="4"/>
        <end position="24"/>
    </location>
</feature>
<feature type="transmembrane region" description="Helical" evidence="2">
    <location>
        <begin position="30"/>
        <end position="50"/>
    </location>
</feature>
<feature type="transmembrane region" description="Helical" evidence="2">
    <location>
        <begin position="61"/>
        <end position="81"/>
    </location>
</feature>
<feature type="transmembrane region" description="Helical" evidence="2">
    <location>
        <begin position="86"/>
        <end position="106"/>
    </location>
</feature>
<feature type="transmembrane region" description="Helical" evidence="2">
    <location>
        <begin position="117"/>
        <end position="137"/>
    </location>
</feature>
<feature type="transmembrane region" description="Helical" evidence="2">
    <location>
        <begin position="170"/>
        <end position="190"/>
    </location>
</feature>
<comment type="function">
    <text evidence="1">Mediates export of lysine.</text>
</comment>
<comment type="subcellular location">
    <subcellularLocation>
        <location evidence="3">Cell inner membrane</location>
        <topology evidence="2">Multi-pass membrane protein</topology>
    </subcellularLocation>
</comment>
<comment type="similarity">
    <text evidence="3">Belongs to the LysO family.</text>
</comment>
<protein>
    <recommendedName>
        <fullName evidence="1">Putative lysine exporter</fullName>
    </recommendedName>
</protein>
<gene>
    <name type="ordered locus">HI_1452</name>
</gene>
<dbReference type="EMBL" id="L42023">
    <property type="protein sequence ID" value="AAC23105.1"/>
    <property type="molecule type" value="Genomic_DNA"/>
</dbReference>
<dbReference type="PIR" id="D64030">
    <property type="entry name" value="D64030"/>
</dbReference>
<dbReference type="RefSeq" id="NP_439603.1">
    <property type="nucleotide sequence ID" value="NC_000907.1"/>
</dbReference>
<dbReference type="STRING" id="71421.HI_1452"/>
<dbReference type="EnsemblBacteria" id="AAC23105">
    <property type="protein sequence ID" value="AAC23105"/>
    <property type="gene ID" value="HI_1452"/>
</dbReference>
<dbReference type="KEGG" id="hin:HI_1452"/>
<dbReference type="PATRIC" id="fig|71421.8.peg.1513"/>
<dbReference type="eggNOG" id="COG2431">
    <property type="taxonomic scope" value="Bacteria"/>
</dbReference>
<dbReference type="HOGENOM" id="CLU_078428_1_0_6"/>
<dbReference type="OrthoDB" id="5451742at2"/>
<dbReference type="PhylomeDB" id="P44201"/>
<dbReference type="BioCyc" id="HINF71421:G1GJ1-1477-MONOMER"/>
<dbReference type="Proteomes" id="UP000000579">
    <property type="component" value="Chromosome"/>
</dbReference>
<dbReference type="GO" id="GO:0005886">
    <property type="term" value="C:plasma membrane"/>
    <property type="evidence" value="ECO:0000318"/>
    <property type="project" value="GO_Central"/>
</dbReference>
<dbReference type="GO" id="GO:0015661">
    <property type="term" value="F:L-lysine efflux transmembrane transporter activity"/>
    <property type="evidence" value="ECO:0000318"/>
    <property type="project" value="GO_Central"/>
</dbReference>
<dbReference type="InterPro" id="IPR005642">
    <property type="entry name" value="LysO"/>
</dbReference>
<dbReference type="PANTHER" id="PTHR35804">
    <property type="entry name" value="LYSINE EXPORTER LYSO"/>
    <property type="match status" value="1"/>
</dbReference>
<dbReference type="PANTHER" id="PTHR35804:SF1">
    <property type="entry name" value="LYSINE EXPORTER LYSO"/>
    <property type="match status" value="1"/>
</dbReference>
<dbReference type="Pfam" id="PF03956">
    <property type="entry name" value="Lys_export"/>
    <property type="match status" value="1"/>
</dbReference>
<evidence type="ECO:0000250" key="1">
    <source>
        <dbReference type="UniProtKB" id="P75826"/>
    </source>
</evidence>
<evidence type="ECO:0000255" key="2"/>
<evidence type="ECO:0000305" key="3"/>
<proteinExistence type="inferred from homology"/>
<organism>
    <name type="scientific">Haemophilus influenzae (strain ATCC 51907 / DSM 11121 / KW20 / Rd)</name>
    <dbReference type="NCBI Taxonomy" id="71421"/>
    <lineage>
        <taxon>Bacteria</taxon>
        <taxon>Pseudomonadati</taxon>
        <taxon>Pseudomonadota</taxon>
        <taxon>Gammaproteobacteria</taxon>
        <taxon>Pasteurellales</taxon>
        <taxon>Pasteurellaceae</taxon>
        <taxon>Haemophilus</taxon>
    </lineage>
</organism>
<sequence>MEELLSAVIIGIVLGWLCKDWLHFPNGSNLYVLITLIFFVGIQLRNNGISLKEVLLNKQGLMMGAIFTLSSLIGGVISAFFLSMPITQGLAFSSGFGWYSLSSVVLTNAWGPMQGSIAFFNDLSREILSLFLIPLFMQHYRSTAIEITGATALDCTLPIIQKSGGIEVTPIAISFGMVTNLLPPLLLVFFSSFPI</sequence>
<name>LYSO_HAEIN</name>
<keyword id="KW-0029">Amino-acid transport</keyword>
<keyword id="KW-0997">Cell inner membrane</keyword>
<keyword id="KW-1003">Cell membrane</keyword>
<keyword id="KW-0472">Membrane</keyword>
<keyword id="KW-1185">Reference proteome</keyword>
<keyword id="KW-0812">Transmembrane</keyword>
<keyword id="KW-1133">Transmembrane helix</keyword>
<keyword id="KW-0813">Transport</keyword>